<sequence>MEYISPFDRFIRHFDSALRVMSGVSAASRPSPASGVADGVLDDAERRHSAGLMRVNHVGEVCAQALYQAQAQFAHSDAIKQQFELAGREEEDHLAWTAQRLRELGSHPSLLNPLWYAGAYALGTVAAKLGDARSLGFVVETERQVEAHLNEHMNRLPPQDAKSLAVVAQMSADEVAHGSAAQALGAQAVPPLAQKGMQAISKIMTTTAYYI</sequence>
<gene>
    <name evidence="1" type="primary">coq7</name>
    <name type="ordered locus">HEAR0238</name>
</gene>
<name>COQ7_HERAR</name>
<evidence type="ECO:0000255" key="1">
    <source>
        <dbReference type="HAMAP-Rule" id="MF_01658"/>
    </source>
</evidence>
<evidence type="ECO:0000305" key="2"/>
<organism>
    <name type="scientific">Herminiimonas arsenicoxydans</name>
    <dbReference type="NCBI Taxonomy" id="204773"/>
    <lineage>
        <taxon>Bacteria</taxon>
        <taxon>Pseudomonadati</taxon>
        <taxon>Pseudomonadota</taxon>
        <taxon>Betaproteobacteria</taxon>
        <taxon>Burkholderiales</taxon>
        <taxon>Oxalobacteraceae</taxon>
        <taxon>Herminiimonas</taxon>
    </lineage>
</organism>
<dbReference type="EC" id="1.14.99.60" evidence="1"/>
<dbReference type="EMBL" id="CU207211">
    <property type="protein sequence ID" value="CAL60467.1"/>
    <property type="status" value="ALT_INIT"/>
    <property type="molecule type" value="Genomic_DNA"/>
</dbReference>
<dbReference type="SMR" id="A4G1T0"/>
<dbReference type="STRING" id="204773.HEAR0238"/>
<dbReference type="KEGG" id="har:HEAR0238"/>
<dbReference type="eggNOG" id="COG2941">
    <property type="taxonomic scope" value="Bacteria"/>
</dbReference>
<dbReference type="HOGENOM" id="CLU_088601_0_0_4"/>
<dbReference type="OrthoDB" id="5192789at2"/>
<dbReference type="UniPathway" id="UPA00232"/>
<dbReference type="Proteomes" id="UP000006697">
    <property type="component" value="Chromosome"/>
</dbReference>
<dbReference type="GO" id="GO:0005886">
    <property type="term" value="C:plasma membrane"/>
    <property type="evidence" value="ECO:0007669"/>
    <property type="project" value="UniProtKB-SubCell"/>
</dbReference>
<dbReference type="GO" id="GO:0008682">
    <property type="term" value="F:3-demethoxyubiquinol 3-hydroxylase activity"/>
    <property type="evidence" value="ECO:0007669"/>
    <property type="project" value="UniProtKB-EC"/>
</dbReference>
<dbReference type="GO" id="GO:0046872">
    <property type="term" value="F:metal ion binding"/>
    <property type="evidence" value="ECO:0007669"/>
    <property type="project" value="UniProtKB-KW"/>
</dbReference>
<dbReference type="GO" id="GO:0006744">
    <property type="term" value="P:ubiquinone biosynthetic process"/>
    <property type="evidence" value="ECO:0007669"/>
    <property type="project" value="UniProtKB-UniRule"/>
</dbReference>
<dbReference type="CDD" id="cd01042">
    <property type="entry name" value="DMQH"/>
    <property type="match status" value="1"/>
</dbReference>
<dbReference type="Gene3D" id="1.20.1260.10">
    <property type="match status" value="1"/>
</dbReference>
<dbReference type="HAMAP" id="MF_01658">
    <property type="entry name" value="COQ7"/>
    <property type="match status" value="1"/>
</dbReference>
<dbReference type="InterPro" id="IPR047809">
    <property type="entry name" value="COQ7_proteobact"/>
</dbReference>
<dbReference type="InterPro" id="IPR012347">
    <property type="entry name" value="Ferritin-like"/>
</dbReference>
<dbReference type="InterPro" id="IPR009078">
    <property type="entry name" value="Ferritin-like_SF"/>
</dbReference>
<dbReference type="InterPro" id="IPR011566">
    <property type="entry name" value="Ubq_synth_Coq7"/>
</dbReference>
<dbReference type="NCBIfam" id="NF033656">
    <property type="entry name" value="DMQ_monoox_COQ7"/>
    <property type="match status" value="1"/>
</dbReference>
<dbReference type="PANTHER" id="PTHR11237:SF4">
    <property type="entry name" value="5-DEMETHOXYUBIQUINONE HYDROXYLASE, MITOCHONDRIAL"/>
    <property type="match status" value="1"/>
</dbReference>
<dbReference type="PANTHER" id="PTHR11237">
    <property type="entry name" value="COENZYME Q10 BIOSYNTHESIS PROTEIN 7"/>
    <property type="match status" value="1"/>
</dbReference>
<dbReference type="Pfam" id="PF03232">
    <property type="entry name" value="COQ7"/>
    <property type="match status" value="1"/>
</dbReference>
<dbReference type="SUPFAM" id="SSF47240">
    <property type="entry name" value="Ferritin-like"/>
    <property type="match status" value="1"/>
</dbReference>
<proteinExistence type="inferred from homology"/>
<protein>
    <recommendedName>
        <fullName evidence="1">3-demethoxyubiquinol 3-hydroxylase</fullName>
        <shortName evidence="1">DMQ hydroxylase</shortName>
        <ecNumber evidence="1">1.14.99.60</ecNumber>
    </recommendedName>
    <alternativeName>
        <fullName evidence="1">2-nonaprenyl-3-methyl-6-methoxy-1,4-benzoquinol hydroxylase</fullName>
    </alternativeName>
</protein>
<reference key="1">
    <citation type="journal article" date="2007" name="PLoS Genet.">
        <title>A tale of two oxidation states: bacterial colonization of arsenic-rich environments.</title>
        <authorList>
            <person name="Muller D."/>
            <person name="Medigue C."/>
            <person name="Koechler S."/>
            <person name="Barbe V."/>
            <person name="Barakat M."/>
            <person name="Talla E."/>
            <person name="Bonnefoy V."/>
            <person name="Krin E."/>
            <person name="Arsene-Ploetze F."/>
            <person name="Carapito C."/>
            <person name="Chandler M."/>
            <person name="Cournoyer B."/>
            <person name="Cruveiller S."/>
            <person name="Dossat C."/>
            <person name="Duval S."/>
            <person name="Heymann M."/>
            <person name="Leize E."/>
            <person name="Lieutaud A."/>
            <person name="Lievremont D."/>
            <person name="Makita Y."/>
            <person name="Mangenot S."/>
            <person name="Nitschke W."/>
            <person name="Ortet P."/>
            <person name="Perdrial N."/>
            <person name="Schoepp B."/>
            <person name="Siguier P."/>
            <person name="Simeonova D.D."/>
            <person name="Rouy Z."/>
            <person name="Segurens B."/>
            <person name="Turlin E."/>
            <person name="Vallenet D."/>
            <person name="van Dorsselaer A."/>
            <person name="Weiss S."/>
            <person name="Weissenbach J."/>
            <person name="Lett M.-C."/>
            <person name="Danchin A."/>
            <person name="Bertin P.N."/>
        </authorList>
    </citation>
    <scope>NUCLEOTIDE SEQUENCE [LARGE SCALE GENOMIC DNA]</scope>
    <source>
        <strain>ULPAs1</strain>
    </source>
</reference>
<comment type="function">
    <text evidence="1">Catalyzes the hydroxylation of 2-nonaprenyl-3-methyl-6-methoxy-1,4-benzoquinol during ubiquinone biosynthesis.</text>
</comment>
<comment type="catalytic activity">
    <reaction evidence="1">
        <text>a 5-methoxy-2-methyl-3-(all-trans-polyprenyl)benzene-1,4-diol + AH2 + O2 = a 3-demethylubiquinol + A + H2O</text>
        <dbReference type="Rhea" id="RHEA:50908"/>
        <dbReference type="Rhea" id="RHEA-COMP:10859"/>
        <dbReference type="Rhea" id="RHEA-COMP:10914"/>
        <dbReference type="ChEBI" id="CHEBI:13193"/>
        <dbReference type="ChEBI" id="CHEBI:15377"/>
        <dbReference type="ChEBI" id="CHEBI:15379"/>
        <dbReference type="ChEBI" id="CHEBI:17499"/>
        <dbReference type="ChEBI" id="CHEBI:84167"/>
        <dbReference type="ChEBI" id="CHEBI:84422"/>
        <dbReference type="EC" id="1.14.99.60"/>
    </reaction>
</comment>
<comment type="cofactor">
    <cofactor evidence="1">
        <name>Fe cation</name>
        <dbReference type="ChEBI" id="CHEBI:24875"/>
    </cofactor>
    <text evidence="1">Binds 2 iron ions per subunit.</text>
</comment>
<comment type="pathway">
    <text evidence="1">Cofactor biosynthesis; ubiquinone biosynthesis.</text>
</comment>
<comment type="subcellular location">
    <subcellularLocation>
        <location evidence="1">Cell membrane</location>
        <topology evidence="1">Peripheral membrane protein</topology>
    </subcellularLocation>
</comment>
<comment type="similarity">
    <text evidence="1">Belongs to the COQ7 family.</text>
</comment>
<comment type="sequence caution" evidence="2">
    <conflict type="erroneous initiation">
        <sequence resource="EMBL-CDS" id="CAL60467"/>
    </conflict>
</comment>
<feature type="chain" id="PRO_0000338692" description="3-demethoxyubiquinol 3-hydroxylase">
    <location>
        <begin position="1"/>
        <end position="211"/>
    </location>
</feature>
<feature type="binding site" evidence="1">
    <location>
        <position position="60"/>
    </location>
    <ligand>
        <name>Fe cation</name>
        <dbReference type="ChEBI" id="CHEBI:24875"/>
        <label>1</label>
    </ligand>
</feature>
<feature type="binding site" evidence="1">
    <location>
        <position position="90"/>
    </location>
    <ligand>
        <name>Fe cation</name>
        <dbReference type="ChEBI" id="CHEBI:24875"/>
        <label>1</label>
    </ligand>
</feature>
<feature type="binding site" evidence="1">
    <location>
        <position position="90"/>
    </location>
    <ligand>
        <name>Fe cation</name>
        <dbReference type="ChEBI" id="CHEBI:24875"/>
        <label>2</label>
    </ligand>
</feature>
<feature type="binding site" evidence="1">
    <location>
        <position position="93"/>
    </location>
    <ligand>
        <name>Fe cation</name>
        <dbReference type="ChEBI" id="CHEBI:24875"/>
        <label>1</label>
    </ligand>
</feature>
<feature type="binding site" evidence="1">
    <location>
        <position position="142"/>
    </location>
    <ligand>
        <name>Fe cation</name>
        <dbReference type="ChEBI" id="CHEBI:24875"/>
        <label>2</label>
    </ligand>
</feature>
<feature type="binding site" evidence="1">
    <location>
        <position position="174"/>
    </location>
    <ligand>
        <name>Fe cation</name>
        <dbReference type="ChEBI" id="CHEBI:24875"/>
        <label>1</label>
    </ligand>
</feature>
<feature type="binding site" evidence="1">
    <location>
        <position position="174"/>
    </location>
    <ligand>
        <name>Fe cation</name>
        <dbReference type="ChEBI" id="CHEBI:24875"/>
        <label>2</label>
    </ligand>
</feature>
<feature type="binding site" evidence="1">
    <location>
        <position position="177"/>
    </location>
    <ligand>
        <name>Fe cation</name>
        <dbReference type="ChEBI" id="CHEBI:24875"/>
        <label>2</label>
    </ligand>
</feature>
<keyword id="KW-1003">Cell membrane</keyword>
<keyword id="KW-0408">Iron</keyword>
<keyword id="KW-0472">Membrane</keyword>
<keyword id="KW-0479">Metal-binding</keyword>
<keyword id="KW-0503">Monooxygenase</keyword>
<keyword id="KW-0560">Oxidoreductase</keyword>
<keyword id="KW-1185">Reference proteome</keyword>
<keyword id="KW-0831">Ubiquinone biosynthesis</keyword>
<accession>A4G1T0</accession>